<proteinExistence type="inferred from homology"/>
<protein>
    <recommendedName>
        <fullName>CDP-diacylglycerol--glycerol-3-phosphate 3-phosphatidyltransferase</fullName>
        <ecNumber>2.7.8.5</ecNumber>
    </recommendedName>
    <alternativeName>
        <fullName>Phosphatidylglycerophosphate synthase</fullName>
        <shortName>PGP synthase</shortName>
    </alternativeName>
</protein>
<gene>
    <name type="primary">pgsA</name>
    <name type="synonym">pgs</name>
    <name type="ordered locus">TP_0256</name>
</gene>
<accession>O66076</accession>
<reference key="1">
    <citation type="submission" date="1997-05" db="EMBL/GenBank/DDBJ databases">
        <authorList>
            <person name="Shevchenko D.V."/>
            <person name="Akins D.R."/>
            <person name="Robinson E.J."/>
            <person name="Shevchenko O.V."/>
            <person name="Radolf J.D."/>
        </authorList>
    </citation>
    <scope>NUCLEOTIDE SEQUENCE [GENOMIC DNA]</scope>
</reference>
<reference key="2">
    <citation type="journal article" date="1998" name="Science">
        <title>Complete genome sequence of Treponema pallidum, the syphilis spirochete.</title>
        <authorList>
            <person name="Fraser C.M."/>
            <person name="Norris S.J."/>
            <person name="Weinstock G.M."/>
            <person name="White O."/>
            <person name="Sutton G.G."/>
            <person name="Dodson R.J."/>
            <person name="Gwinn M.L."/>
            <person name="Hickey E.K."/>
            <person name="Clayton R.A."/>
            <person name="Ketchum K.A."/>
            <person name="Sodergren E."/>
            <person name="Hardham J.M."/>
            <person name="McLeod M.P."/>
            <person name="Salzberg S.L."/>
            <person name="Peterson J.D."/>
            <person name="Khalak H.G."/>
            <person name="Richardson D.L."/>
            <person name="Howell J.K."/>
            <person name="Chidambaram M."/>
            <person name="Utterback T.R."/>
            <person name="McDonald L.A."/>
            <person name="Artiach P."/>
            <person name="Bowman C."/>
            <person name="Cotton M.D."/>
            <person name="Fujii C."/>
            <person name="Garland S.A."/>
            <person name="Hatch B."/>
            <person name="Horst K."/>
            <person name="Roberts K.M."/>
            <person name="Sandusky M."/>
            <person name="Weidman J.F."/>
            <person name="Smith H.O."/>
            <person name="Venter J.C."/>
        </authorList>
    </citation>
    <scope>NUCLEOTIDE SEQUENCE [LARGE SCALE GENOMIC DNA]</scope>
    <source>
        <strain>Nichols</strain>
    </source>
</reference>
<keyword id="KW-1003">Cell membrane</keyword>
<keyword id="KW-0444">Lipid biosynthesis</keyword>
<keyword id="KW-0443">Lipid metabolism</keyword>
<keyword id="KW-0472">Membrane</keyword>
<keyword id="KW-0594">Phospholipid biosynthesis</keyword>
<keyword id="KW-1208">Phospholipid metabolism</keyword>
<keyword id="KW-1185">Reference proteome</keyword>
<keyword id="KW-0808">Transferase</keyword>
<keyword id="KW-0812">Transmembrane</keyword>
<keyword id="KW-1133">Transmembrane helix</keyword>
<organism>
    <name type="scientific">Treponema pallidum (strain Nichols)</name>
    <dbReference type="NCBI Taxonomy" id="243276"/>
    <lineage>
        <taxon>Bacteria</taxon>
        <taxon>Pseudomonadati</taxon>
        <taxon>Spirochaetota</taxon>
        <taxon>Spirochaetia</taxon>
        <taxon>Spirochaetales</taxon>
        <taxon>Treponemataceae</taxon>
        <taxon>Treponema</taxon>
    </lineage>
</organism>
<dbReference type="EC" id="2.7.8.5"/>
<dbReference type="EMBL" id="U95744">
    <property type="protein sequence ID" value="AAC08322.1"/>
    <property type="molecule type" value="Genomic_DNA"/>
</dbReference>
<dbReference type="EMBL" id="AE000520">
    <property type="protein sequence ID" value="AAC65245.1"/>
    <property type="molecule type" value="Genomic_DNA"/>
</dbReference>
<dbReference type="PIR" id="E71346">
    <property type="entry name" value="E71346"/>
</dbReference>
<dbReference type="RefSeq" id="WP_010881705.1">
    <property type="nucleotide sequence ID" value="NC_021490.2"/>
</dbReference>
<dbReference type="SMR" id="O66076"/>
<dbReference type="IntAct" id="O66076">
    <property type="interactions" value="3"/>
</dbReference>
<dbReference type="STRING" id="243276.TP_0256"/>
<dbReference type="EnsemblBacteria" id="AAC65245">
    <property type="protein sequence ID" value="AAC65245"/>
    <property type="gene ID" value="TP_0256"/>
</dbReference>
<dbReference type="GeneID" id="93876047"/>
<dbReference type="KEGG" id="tpa:TP_0256"/>
<dbReference type="KEGG" id="tpw:TPANIC_0256"/>
<dbReference type="eggNOG" id="COG0558">
    <property type="taxonomic scope" value="Bacteria"/>
</dbReference>
<dbReference type="HOGENOM" id="CLU_051314_2_3_12"/>
<dbReference type="OrthoDB" id="9796672at2"/>
<dbReference type="UniPathway" id="UPA00084">
    <property type="reaction ID" value="UER00503"/>
</dbReference>
<dbReference type="Proteomes" id="UP000000811">
    <property type="component" value="Chromosome"/>
</dbReference>
<dbReference type="GO" id="GO:0005886">
    <property type="term" value="C:plasma membrane"/>
    <property type="evidence" value="ECO:0007669"/>
    <property type="project" value="UniProtKB-SubCell"/>
</dbReference>
<dbReference type="GO" id="GO:0008444">
    <property type="term" value="F:CDP-diacylglycerol-glycerol-3-phosphate 3-phosphatidyltransferase activity"/>
    <property type="evidence" value="ECO:0007669"/>
    <property type="project" value="UniProtKB-EC"/>
</dbReference>
<dbReference type="GO" id="GO:0006655">
    <property type="term" value="P:phosphatidylglycerol biosynthetic process"/>
    <property type="evidence" value="ECO:0007669"/>
    <property type="project" value="UniProtKB-UniPathway"/>
</dbReference>
<dbReference type="Gene3D" id="1.20.120.1760">
    <property type="match status" value="1"/>
</dbReference>
<dbReference type="InterPro" id="IPR050324">
    <property type="entry name" value="CDP-alcohol_PTase-I"/>
</dbReference>
<dbReference type="InterPro" id="IPR000462">
    <property type="entry name" value="CDP-OH_P_trans"/>
</dbReference>
<dbReference type="InterPro" id="IPR043130">
    <property type="entry name" value="CDP-OH_PTrfase_TM_dom"/>
</dbReference>
<dbReference type="InterPro" id="IPR048254">
    <property type="entry name" value="CDP_ALCOHOL_P_TRANSF_CS"/>
</dbReference>
<dbReference type="InterPro" id="IPR004570">
    <property type="entry name" value="Phosphatidylglycerol_P_synth"/>
</dbReference>
<dbReference type="NCBIfam" id="TIGR00560">
    <property type="entry name" value="pgsA"/>
    <property type="match status" value="1"/>
</dbReference>
<dbReference type="PANTHER" id="PTHR14269:SF62">
    <property type="entry name" value="CDP-DIACYLGLYCEROL--GLYCEROL-3-PHOSPHATE 3-PHOSPHATIDYLTRANSFERASE 1, CHLOROPLASTIC"/>
    <property type="match status" value="1"/>
</dbReference>
<dbReference type="PANTHER" id="PTHR14269">
    <property type="entry name" value="CDP-DIACYLGLYCEROL--GLYCEROL-3-PHOSPHATE 3-PHOSPHATIDYLTRANSFERASE-RELATED"/>
    <property type="match status" value="1"/>
</dbReference>
<dbReference type="Pfam" id="PF01066">
    <property type="entry name" value="CDP-OH_P_transf"/>
    <property type="match status" value="1"/>
</dbReference>
<dbReference type="PIRSF" id="PIRSF000847">
    <property type="entry name" value="Phos_ph_gly_syn"/>
    <property type="match status" value="1"/>
</dbReference>
<dbReference type="PROSITE" id="PS00379">
    <property type="entry name" value="CDP_ALCOHOL_P_TRANSF"/>
    <property type="match status" value="1"/>
</dbReference>
<evidence type="ECO:0000250" key="1"/>
<evidence type="ECO:0000255" key="2"/>
<evidence type="ECO:0000305" key="3"/>
<sequence length="216" mass="24639">MRLSDFYTALRLALVLPFFALYHMSRWVVMYFPAANVGRVVSIASVLLFLFIACTDFLDGYYARKSGKYSSFGKVFDPFADVIANVTVMLCLVADNFMPVFLFLCILYREFGMMFLRMLACGEGHVVGAQRMGKLKTASYMGAVLFSLLLKALYAFELAGADWYERMRAVGRLVYVVPVVLALASFFSYLKTFFPILKRVCGRTRYPVCKTCREWD</sequence>
<feature type="chain" id="PRO_0000056792" description="CDP-diacylglycerol--glycerol-3-phosphate 3-phosphatidyltransferase">
    <location>
        <begin position="1"/>
        <end position="216"/>
    </location>
</feature>
<feature type="transmembrane region" description="Helical" evidence="2">
    <location>
        <begin position="40"/>
        <end position="60"/>
    </location>
</feature>
<feature type="transmembrane region" description="Helical" evidence="2">
    <location>
        <begin position="88"/>
        <end position="108"/>
    </location>
</feature>
<feature type="transmembrane region" description="Helical" evidence="2">
    <location>
        <begin position="141"/>
        <end position="161"/>
    </location>
</feature>
<feature type="transmembrane region" description="Helical" evidence="2">
    <location>
        <begin position="176"/>
        <end position="196"/>
    </location>
</feature>
<name>PGSA_TREPA</name>
<comment type="function">
    <text evidence="1">This protein catalyzes the committed step to the synthesis of the acidic phospholipids.</text>
</comment>
<comment type="catalytic activity">
    <reaction>
        <text>a CDP-1,2-diacyl-sn-glycerol + sn-glycerol 3-phosphate = a 1,2-diacyl-sn-glycero-3-phospho-(1'-sn-glycero-3'-phosphate) + CMP + H(+)</text>
        <dbReference type="Rhea" id="RHEA:12593"/>
        <dbReference type="ChEBI" id="CHEBI:15378"/>
        <dbReference type="ChEBI" id="CHEBI:57597"/>
        <dbReference type="ChEBI" id="CHEBI:58332"/>
        <dbReference type="ChEBI" id="CHEBI:60110"/>
        <dbReference type="ChEBI" id="CHEBI:60377"/>
        <dbReference type="EC" id="2.7.8.5"/>
    </reaction>
</comment>
<comment type="pathway">
    <text>Phospholipid metabolism; phosphatidylglycerol biosynthesis; phosphatidylglycerol from CDP-diacylglycerol: step 1/2.</text>
</comment>
<comment type="subcellular location">
    <subcellularLocation>
        <location evidence="1">Cell membrane</location>
        <topology evidence="1">Multi-pass membrane protein</topology>
    </subcellularLocation>
</comment>
<comment type="similarity">
    <text evidence="3">Belongs to the CDP-alcohol phosphatidyltransferase class-I family.</text>
</comment>